<protein>
    <recommendedName>
        <fullName>Probable cytochrome c oxidase subunit 1</fullName>
        <ecNumber>7.1.1.9</ecNumber>
    </recommendedName>
    <alternativeName>
        <fullName>Cytochrome aa3 subunit 1</fullName>
    </alternativeName>
    <alternativeName>
        <fullName>Cytochrome c oxidase polypeptide I</fullName>
    </alternativeName>
</protein>
<evidence type="ECO:0000250" key="1"/>
<evidence type="ECO:0000255" key="2"/>
<evidence type="ECO:0000305" key="3"/>
<evidence type="ECO:0007744" key="4">
    <source>
    </source>
</evidence>
<evidence type="ECO:0007829" key="5">
    <source>
        <dbReference type="PDB" id="8HCR"/>
    </source>
</evidence>
<keyword id="KW-0002">3D-structure</keyword>
<keyword id="KW-0007">Acetylation</keyword>
<keyword id="KW-1003">Cell membrane</keyword>
<keyword id="KW-0186">Copper</keyword>
<keyword id="KW-0249">Electron transport</keyword>
<keyword id="KW-0349">Heme</keyword>
<keyword id="KW-0408">Iron</keyword>
<keyword id="KW-0472">Membrane</keyword>
<keyword id="KW-0479">Metal-binding</keyword>
<keyword id="KW-1185">Reference proteome</keyword>
<keyword id="KW-0679">Respiratory chain</keyword>
<keyword id="KW-1278">Translocase</keyword>
<keyword id="KW-0812">Transmembrane</keyword>
<keyword id="KW-1133">Transmembrane helix</keyword>
<keyword id="KW-0813">Transport</keyword>
<name>COX1_MYCTU</name>
<reference key="1">
    <citation type="journal article" date="1998" name="Nature">
        <title>Deciphering the biology of Mycobacterium tuberculosis from the complete genome sequence.</title>
        <authorList>
            <person name="Cole S.T."/>
            <person name="Brosch R."/>
            <person name="Parkhill J."/>
            <person name="Garnier T."/>
            <person name="Churcher C.M."/>
            <person name="Harris D.E."/>
            <person name="Gordon S.V."/>
            <person name="Eiglmeier K."/>
            <person name="Gas S."/>
            <person name="Barry C.E. III"/>
            <person name="Tekaia F."/>
            <person name="Badcock K."/>
            <person name="Basham D."/>
            <person name="Brown D."/>
            <person name="Chillingworth T."/>
            <person name="Connor R."/>
            <person name="Davies R.M."/>
            <person name="Devlin K."/>
            <person name="Feltwell T."/>
            <person name="Gentles S."/>
            <person name="Hamlin N."/>
            <person name="Holroyd S."/>
            <person name="Hornsby T."/>
            <person name="Jagels K."/>
            <person name="Krogh A."/>
            <person name="McLean J."/>
            <person name="Moule S."/>
            <person name="Murphy L.D."/>
            <person name="Oliver S."/>
            <person name="Osborne J."/>
            <person name="Quail M.A."/>
            <person name="Rajandream M.A."/>
            <person name="Rogers J."/>
            <person name="Rutter S."/>
            <person name="Seeger K."/>
            <person name="Skelton S."/>
            <person name="Squares S."/>
            <person name="Squares R."/>
            <person name="Sulston J.E."/>
            <person name="Taylor K."/>
            <person name="Whitehead S."/>
            <person name="Barrell B.G."/>
        </authorList>
    </citation>
    <scope>NUCLEOTIDE SEQUENCE [LARGE SCALE GENOMIC DNA]</scope>
    <source>
        <strain>ATCC 25618 / H37Rv</strain>
    </source>
</reference>
<reference key="2">
    <citation type="journal article" date="2011" name="Mol. Cell. Proteomics">
        <title>Proteogenomic analysis of Mycobacterium tuberculosis by high resolution mass spectrometry.</title>
        <authorList>
            <person name="Kelkar D.S."/>
            <person name="Kumar D."/>
            <person name="Kumar P."/>
            <person name="Balakrishnan L."/>
            <person name="Muthusamy B."/>
            <person name="Yadav A.K."/>
            <person name="Shrivastava P."/>
            <person name="Marimuthu A."/>
            <person name="Anand S."/>
            <person name="Sundaram H."/>
            <person name="Kingsbury R."/>
            <person name="Harsha H.C."/>
            <person name="Nair B."/>
            <person name="Prasad T.S."/>
            <person name="Chauhan D.S."/>
            <person name="Katoch K."/>
            <person name="Katoch V.M."/>
            <person name="Kumar P."/>
            <person name="Chaerkady R."/>
            <person name="Ramachandran S."/>
            <person name="Dash D."/>
            <person name="Pandey A."/>
        </authorList>
    </citation>
    <scope>ACETYLATION [LARGE SCALE ANALYSIS] AT THR-2</scope>
    <scope>CLEAVAGE OF INITIATOR METHIONINE [LARGE SCALE ANALYSIS]</scope>
    <scope>IDENTIFICATION BY MASS SPECTROMETRY [LARGE SCALE ANALYSIS]</scope>
    <source>
        <strain>ATCC 25618 / H37Rv</strain>
    </source>
</reference>
<proteinExistence type="evidence at protein level"/>
<gene>
    <name type="primary">ctaD</name>
    <name type="ordered locus">Rv3043c</name>
    <name type="ORF">MTV012.58c</name>
</gene>
<sequence>MTAEAPPLGELEAIRPYPARTGPKGSLVYKLITTTDHKMIGIMYCVACISFFFIGGLLALLMRTELAAPGLQFLSNEQFNQLFTMHGTIMLLFYATPIVFGFANLVLPLQIGAPDVAFPRLNAFSFWLFVFGATIGAAGFITPGGAADFGWTAYTPLTDAIHSPGAGGDLWIMGLIVAGLGTILGAVNMITTVVCMRAPGMTMFRMPIFTWNIMVTSILILIAFPLLTAALFGLAADRHLGAHIYDAANGGVLLWQHLFWFFGHPEVYIIALPFFGIVSEIFPVFSRKPIFGYTTLVYATLSIAALSVAVWAHHMFATGAVLLPFFSFMTYLIAVPTGIKFFNWIGTMWKGQLTFETPMLFSVGFMVTFLLGGLTGVLLASPPLDFHVTDSYFVVAHFHYVLFGTIVFATFAGIYFWFPKMTGRLLDERLGKLHFWLTFIGFHTTFLVQHWLGDEGMPRRYADYLPTDGFQGLNVVSTIGAFILGASMFPFVWNVFKSWRYGEVVTVDDPWGYGNSLEWATSCPPPRHNFTELPRIRSERPAFELHYPHMVERLRAEAHVGRHHDEPAMVTSS</sequence>
<feature type="initiator methionine" description="Removed" evidence="4">
    <location>
        <position position="1"/>
    </location>
</feature>
<feature type="chain" id="PRO_0000183443" description="Probable cytochrome c oxidase subunit 1">
    <location>
        <begin position="2"/>
        <end position="573"/>
    </location>
</feature>
<feature type="transmembrane region" description="Helical" evidence="2">
    <location>
        <begin position="40"/>
        <end position="60"/>
    </location>
</feature>
<feature type="transmembrane region" description="Helical" evidence="2">
    <location>
        <begin position="89"/>
        <end position="109"/>
    </location>
</feature>
<feature type="transmembrane region" description="Helical" evidence="2">
    <location>
        <begin position="121"/>
        <end position="141"/>
    </location>
</feature>
<feature type="transmembrane region" description="Helical" evidence="2">
    <location>
        <begin position="170"/>
        <end position="190"/>
    </location>
</feature>
<feature type="transmembrane region" description="Helical" evidence="2">
    <location>
        <begin position="213"/>
        <end position="233"/>
    </location>
</feature>
<feature type="transmembrane region" description="Helical" evidence="2">
    <location>
        <begin position="258"/>
        <end position="278"/>
    </location>
</feature>
<feature type="transmembrane region" description="Helical" evidence="2">
    <location>
        <begin position="290"/>
        <end position="310"/>
    </location>
</feature>
<feature type="transmembrane region" description="Helical" evidence="2">
    <location>
        <begin position="315"/>
        <end position="335"/>
    </location>
</feature>
<feature type="transmembrane region" description="Helical" evidence="2">
    <location>
        <begin position="359"/>
        <end position="379"/>
    </location>
</feature>
<feature type="transmembrane region" description="Helical" evidence="2">
    <location>
        <begin position="398"/>
        <end position="418"/>
    </location>
</feature>
<feature type="transmembrane region" description="Helical" evidence="2">
    <location>
        <begin position="433"/>
        <end position="453"/>
    </location>
</feature>
<feature type="transmembrane region" description="Helical" evidence="2">
    <location>
        <begin position="476"/>
        <end position="496"/>
    </location>
</feature>
<feature type="binding site" description="axial binding residue" evidence="1">
    <location>
        <position position="86"/>
    </location>
    <ligand>
        <name>Fe(II)-heme a</name>
        <dbReference type="ChEBI" id="CHEBI:61715"/>
    </ligand>
    <ligandPart>
        <name>Fe</name>
        <dbReference type="ChEBI" id="CHEBI:18248"/>
    </ligandPart>
</feature>
<feature type="binding site" evidence="1">
    <location>
        <position position="264"/>
    </location>
    <ligand>
        <name>Cu cation</name>
        <dbReference type="ChEBI" id="CHEBI:23378"/>
        <label>B</label>
    </ligand>
</feature>
<feature type="binding site" evidence="1">
    <location>
        <position position="268"/>
    </location>
    <ligand>
        <name>Cu cation</name>
        <dbReference type="ChEBI" id="CHEBI:23378"/>
        <label>B</label>
    </ligand>
</feature>
<feature type="binding site" evidence="1">
    <location>
        <position position="313"/>
    </location>
    <ligand>
        <name>Cu cation</name>
        <dbReference type="ChEBI" id="CHEBI:23378"/>
        <label>B</label>
    </ligand>
</feature>
<feature type="binding site" evidence="1">
    <location>
        <position position="314"/>
    </location>
    <ligand>
        <name>Cu cation</name>
        <dbReference type="ChEBI" id="CHEBI:23378"/>
        <label>B</label>
    </ligand>
</feature>
<feature type="binding site" description="axial binding residue" evidence="1">
    <location>
        <position position="397"/>
    </location>
    <ligand>
        <name>heme a3</name>
        <dbReference type="ChEBI" id="CHEBI:83282"/>
    </ligand>
    <ligandPart>
        <name>Fe</name>
        <dbReference type="ChEBI" id="CHEBI:18248"/>
    </ligandPart>
</feature>
<feature type="binding site" description="axial binding residue" evidence="1">
    <location>
        <position position="399"/>
    </location>
    <ligand>
        <name>Fe(II)-heme a</name>
        <dbReference type="ChEBI" id="CHEBI:61715"/>
    </ligand>
    <ligandPart>
        <name>Fe</name>
        <dbReference type="ChEBI" id="CHEBI:18248"/>
    </ligandPart>
</feature>
<feature type="modified residue" description="N-acetylthreonine" evidence="4">
    <location>
        <position position="2"/>
    </location>
</feature>
<feature type="cross-link" description="1'-histidyl-3'-tyrosine (His-Tyr)" evidence="1">
    <location>
        <begin position="264"/>
        <end position="268"/>
    </location>
</feature>
<feature type="helix" evidence="5">
    <location>
        <begin position="28"/>
        <end position="33"/>
    </location>
</feature>
<feature type="helix" evidence="5">
    <location>
        <begin position="37"/>
        <end position="66"/>
    </location>
</feature>
<feature type="strand" evidence="5">
    <location>
        <begin position="67"/>
        <end position="70"/>
    </location>
</feature>
<feature type="helix" evidence="5">
    <location>
        <begin position="76"/>
        <end position="92"/>
    </location>
</feature>
<feature type="helix" evidence="5">
    <location>
        <begin position="95"/>
        <end position="111"/>
    </location>
</feature>
<feature type="helix" evidence="5">
    <location>
        <begin position="119"/>
        <end position="137"/>
    </location>
</feature>
<feature type="turn" evidence="5">
    <location>
        <begin position="138"/>
        <end position="141"/>
    </location>
</feature>
<feature type="helix" evidence="5">
    <location>
        <begin position="156"/>
        <end position="158"/>
    </location>
</feature>
<feature type="strand" evidence="5">
    <location>
        <begin position="159"/>
        <end position="162"/>
    </location>
</feature>
<feature type="helix" evidence="5">
    <location>
        <begin position="167"/>
        <end position="195"/>
    </location>
</feature>
<feature type="helix" evidence="5">
    <location>
        <begin position="208"/>
        <end position="240"/>
    </location>
</feature>
<feature type="turn" evidence="5">
    <location>
        <begin position="247"/>
        <end position="250"/>
    </location>
</feature>
<feature type="helix" evidence="5">
    <location>
        <begin position="251"/>
        <end position="269"/>
    </location>
</feature>
<feature type="helix" evidence="5">
    <location>
        <begin position="272"/>
        <end position="286"/>
    </location>
</feature>
<feature type="helix" evidence="5">
    <location>
        <begin position="293"/>
        <end position="306"/>
    </location>
</feature>
<feature type="helix" evidence="5">
    <location>
        <begin position="311"/>
        <end position="314"/>
    </location>
</feature>
<feature type="turn" evidence="5">
    <location>
        <begin position="316"/>
        <end position="319"/>
    </location>
</feature>
<feature type="helix" evidence="5">
    <location>
        <begin position="323"/>
        <end position="348"/>
    </location>
</feature>
<feature type="helix" evidence="5">
    <location>
        <begin position="357"/>
        <end position="379"/>
    </location>
</feature>
<feature type="helix" evidence="5">
    <location>
        <begin position="382"/>
        <end position="388"/>
    </location>
</feature>
<feature type="helix" evidence="5">
    <location>
        <begin position="392"/>
        <end position="422"/>
    </location>
</feature>
<feature type="strand" evidence="5">
    <location>
        <begin position="423"/>
        <end position="425"/>
    </location>
</feature>
<feature type="helix" evidence="5">
    <location>
        <begin position="428"/>
        <end position="445"/>
    </location>
</feature>
<feature type="helix" evidence="5">
    <location>
        <begin position="449"/>
        <end position="453"/>
    </location>
</feature>
<feature type="strand" evidence="5">
    <location>
        <begin position="454"/>
        <end position="456"/>
    </location>
</feature>
<feature type="strand" evidence="5">
    <location>
        <begin position="458"/>
        <end position="460"/>
    </location>
</feature>
<feature type="strand" evidence="5">
    <location>
        <begin position="466"/>
        <end position="469"/>
    </location>
</feature>
<feature type="helix" evidence="5">
    <location>
        <begin position="472"/>
        <end position="486"/>
    </location>
</feature>
<feature type="helix" evidence="5">
    <location>
        <begin position="488"/>
        <end position="500"/>
    </location>
</feature>
<feature type="strand" evidence="5">
    <location>
        <begin position="501"/>
        <end position="504"/>
    </location>
</feature>
<feature type="strand" evidence="5">
    <location>
        <begin position="510"/>
        <end position="513"/>
    </location>
</feature>
<feature type="helix" evidence="5">
    <location>
        <begin position="518"/>
        <end position="520"/>
    </location>
</feature>
<feature type="helix" evidence="5">
    <location>
        <begin position="527"/>
        <end position="529"/>
    </location>
</feature>
<feature type="helix" evidence="5">
    <location>
        <begin position="541"/>
        <end position="546"/>
    </location>
</feature>
<feature type="helix" evidence="5">
    <location>
        <begin position="548"/>
        <end position="550"/>
    </location>
</feature>
<feature type="helix" evidence="5">
    <location>
        <begin position="551"/>
        <end position="556"/>
    </location>
</feature>
<comment type="function">
    <text evidence="1">Cytochrome c oxidase is the component of the respiratory chain that catalyzes the reduction of oxygen to water. Subunits 1-3 form the functional core of the enzyme complex. CO I is the catalytic subunit of the enzyme. Electrons originating in cytochrome c are transferred via the copper A center of subunit 2 and heme A of subunit 1 to the bimetallic center formed by heme A3 and copper B (By similarity).</text>
</comment>
<comment type="catalytic activity">
    <reaction>
        <text>4 Fe(II)-[cytochrome c] + O2 + 8 H(+)(in) = 4 Fe(III)-[cytochrome c] + 2 H2O + 4 H(+)(out)</text>
        <dbReference type="Rhea" id="RHEA:11436"/>
        <dbReference type="Rhea" id="RHEA-COMP:10350"/>
        <dbReference type="Rhea" id="RHEA-COMP:14399"/>
        <dbReference type="ChEBI" id="CHEBI:15377"/>
        <dbReference type="ChEBI" id="CHEBI:15378"/>
        <dbReference type="ChEBI" id="CHEBI:15379"/>
        <dbReference type="ChEBI" id="CHEBI:29033"/>
        <dbReference type="ChEBI" id="CHEBI:29034"/>
        <dbReference type="EC" id="7.1.1.9"/>
    </reaction>
</comment>
<comment type="pathway">
    <text>Energy metabolism; oxidative phosphorylation.</text>
</comment>
<comment type="subcellular location">
    <subcellularLocation>
        <location evidence="3">Cell membrane</location>
        <topology evidence="3">Multi-pass membrane protein</topology>
    </subcellularLocation>
</comment>
<comment type="similarity">
    <text evidence="3">Belongs to the heme-copper respiratory oxidase family.</text>
</comment>
<organism>
    <name type="scientific">Mycobacterium tuberculosis (strain ATCC 25618 / H37Rv)</name>
    <dbReference type="NCBI Taxonomy" id="83332"/>
    <lineage>
        <taxon>Bacteria</taxon>
        <taxon>Bacillati</taxon>
        <taxon>Actinomycetota</taxon>
        <taxon>Actinomycetes</taxon>
        <taxon>Mycobacteriales</taxon>
        <taxon>Mycobacteriaceae</taxon>
        <taxon>Mycobacterium</taxon>
        <taxon>Mycobacterium tuberculosis complex</taxon>
    </lineage>
</organism>
<dbReference type="EC" id="7.1.1.9"/>
<dbReference type="EMBL" id="AL123456">
    <property type="protein sequence ID" value="CCP45852.1"/>
    <property type="molecule type" value="Genomic_DNA"/>
</dbReference>
<dbReference type="PIR" id="F70860">
    <property type="entry name" value="F70860"/>
</dbReference>
<dbReference type="RefSeq" id="NP_217559.1">
    <property type="nucleotide sequence ID" value="NC_000962.3"/>
</dbReference>
<dbReference type="RefSeq" id="WP_003415946.1">
    <property type="nucleotide sequence ID" value="NZ_NVQJ01000011.1"/>
</dbReference>
<dbReference type="PDB" id="8HCR">
    <property type="method" value="EM"/>
    <property type="chains" value="F/R=1-573"/>
</dbReference>
<dbReference type="PDBsum" id="8HCR"/>
<dbReference type="EMDB" id="EMD-34664"/>
<dbReference type="SMR" id="P9WP71"/>
<dbReference type="FunCoup" id="P9WP71">
    <property type="interactions" value="74"/>
</dbReference>
<dbReference type="STRING" id="83332.Rv3043c"/>
<dbReference type="iPTMnet" id="P9WP71"/>
<dbReference type="PaxDb" id="83332-Rv3043c"/>
<dbReference type="DNASU" id="887881"/>
<dbReference type="GeneID" id="45427036"/>
<dbReference type="GeneID" id="887881"/>
<dbReference type="KEGG" id="mtu:Rv3043c"/>
<dbReference type="KEGG" id="mtv:RVBD_3043c"/>
<dbReference type="TubercuList" id="Rv3043c"/>
<dbReference type="eggNOG" id="COG0843">
    <property type="taxonomic scope" value="Bacteria"/>
</dbReference>
<dbReference type="InParanoid" id="P9WP71"/>
<dbReference type="OrthoDB" id="9803294at2"/>
<dbReference type="PhylomeDB" id="P9WP71"/>
<dbReference type="UniPathway" id="UPA00705"/>
<dbReference type="Proteomes" id="UP000001584">
    <property type="component" value="Chromosome"/>
</dbReference>
<dbReference type="GO" id="GO:0005886">
    <property type="term" value="C:plasma membrane"/>
    <property type="evidence" value="ECO:0007005"/>
    <property type="project" value="MTBBASE"/>
</dbReference>
<dbReference type="GO" id="GO:0004129">
    <property type="term" value="F:cytochrome-c oxidase activity"/>
    <property type="evidence" value="ECO:0007669"/>
    <property type="project" value="UniProtKB-EC"/>
</dbReference>
<dbReference type="GO" id="GO:0020037">
    <property type="term" value="F:heme binding"/>
    <property type="evidence" value="ECO:0007669"/>
    <property type="project" value="InterPro"/>
</dbReference>
<dbReference type="GO" id="GO:0046872">
    <property type="term" value="F:metal ion binding"/>
    <property type="evidence" value="ECO:0007669"/>
    <property type="project" value="UniProtKB-KW"/>
</dbReference>
<dbReference type="GO" id="GO:0009060">
    <property type="term" value="P:aerobic respiration"/>
    <property type="evidence" value="ECO:0000318"/>
    <property type="project" value="GO_Central"/>
</dbReference>
<dbReference type="GO" id="GO:0015990">
    <property type="term" value="P:electron transport coupled proton transport"/>
    <property type="evidence" value="ECO:0007669"/>
    <property type="project" value="InterPro"/>
</dbReference>
<dbReference type="GO" id="GO:0006119">
    <property type="term" value="P:oxidative phosphorylation"/>
    <property type="evidence" value="ECO:0007669"/>
    <property type="project" value="UniProtKB-UniPathway"/>
</dbReference>
<dbReference type="GO" id="GO:0022904">
    <property type="term" value="P:respiratory electron transport chain"/>
    <property type="evidence" value="ECO:0000318"/>
    <property type="project" value="GO_Central"/>
</dbReference>
<dbReference type="CDD" id="cd01662">
    <property type="entry name" value="Ubiquinol_Oxidase_I"/>
    <property type="match status" value="1"/>
</dbReference>
<dbReference type="FunFam" id="1.20.210.10:FF:000003">
    <property type="entry name" value="Cytochrome c oxidase subunit 1"/>
    <property type="match status" value="1"/>
</dbReference>
<dbReference type="Gene3D" id="1.20.210.10">
    <property type="entry name" value="Cytochrome c oxidase-like, subunit I domain"/>
    <property type="match status" value="1"/>
</dbReference>
<dbReference type="InterPro" id="IPR023616">
    <property type="entry name" value="Cyt_c_oxase-like_su1_dom"/>
</dbReference>
<dbReference type="InterPro" id="IPR036927">
    <property type="entry name" value="Cyt_c_oxase-like_su1_sf"/>
</dbReference>
<dbReference type="InterPro" id="IPR000883">
    <property type="entry name" value="Cyt_C_Oxase_1"/>
</dbReference>
<dbReference type="InterPro" id="IPR023615">
    <property type="entry name" value="Cyt_c_Oxase_su1_BS"/>
</dbReference>
<dbReference type="InterPro" id="IPR014241">
    <property type="entry name" value="Cyt_c_oxidase_su1_bac"/>
</dbReference>
<dbReference type="NCBIfam" id="TIGR02891">
    <property type="entry name" value="CtaD_CoxA"/>
    <property type="match status" value="1"/>
</dbReference>
<dbReference type="PANTHER" id="PTHR10422">
    <property type="entry name" value="CYTOCHROME C OXIDASE SUBUNIT 1"/>
    <property type="match status" value="1"/>
</dbReference>
<dbReference type="PANTHER" id="PTHR10422:SF18">
    <property type="entry name" value="CYTOCHROME C OXIDASE SUBUNIT 1"/>
    <property type="match status" value="1"/>
</dbReference>
<dbReference type="Pfam" id="PF00115">
    <property type="entry name" value="COX1"/>
    <property type="match status" value="1"/>
</dbReference>
<dbReference type="PRINTS" id="PR01165">
    <property type="entry name" value="CYCOXIDASEI"/>
</dbReference>
<dbReference type="SUPFAM" id="SSF81442">
    <property type="entry name" value="Cytochrome c oxidase subunit I-like"/>
    <property type="match status" value="1"/>
</dbReference>
<dbReference type="PROSITE" id="PS50855">
    <property type="entry name" value="COX1"/>
    <property type="match status" value="1"/>
</dbReference>
<dbReference type="PROSITE" id="PS00077">
    <property type="entry name" value="COX1_CUB"/>
    <property type="match status" value="1"/>
</dbReference>
<accession>P9WP71</accession>
<accession>L0TBM3</accession>
<accession>O53290</accession>
<accession>P63852</accession>